<organism>
    <name type="scientific">Yersinia pestis (strain Pestoides F)</name>
    <dbReference type="NCBI Taxonomy" id="386656"/>
    <lineage>
        <taxon>Bacteria</taxon>
        <taxon>Pseudomonadati</taxon>
        <taxon>Pseudomonadota</taxon>
        <taxon>Gammaproteobacteria</taxon>
        <taxon>Enterobacterales</taxon>
        <taxon>Yersiniaceae</taxon>
        <taxon>Yersinia</taxon>
    </lineage>
</organism>
<accession>A4TSE1</accession>
<comment type="function">
    <text evidence="1">Catalyzes the transfer of a ribosyl phosphate group from 5-phosphoribose 1-diphosphate to orotate, leading to the formation of orotidine monophosphate (OMP).</text>
</comment>
<comment type="catalytic activity">
    <reaction evidence="1">
        <text>orotidine 5'-phosphate + diphosphate = orotate + 5-phospho-alpha-D-ribose 1-diphosphate</text>
        <dbReference type="Rhea" id="RHEA:10380"/>
        <dbReference type="ChEBI" id="CHEBI:30839"/>
        <dbReference type="ChEBI" id="CHEBI:33019"/>
        <dbReference type="ChEBI" id="CHEBI:57538"/>
        <dbReference type="ChEBI" id="CHEBI:58017"/>
        <dbReference type="EC" id="2.4.2.10"/>
    </reaction>
</comment>
<comment type="cofactor">
    <cofactor evidence="1">
        <name>Mg(2+)</name>
        <dbReference type="ChEBI" id="CHEBI:18420"/>
    </cofactor>
</comment>
<comment type="pathway">
    <text evidence="1">Pyrimidine metabolism; UMP biosynthesis via de novo pathway; UMP from orotate: step 1/2.</text>
</comment>
<comment type="subunit">
    <text evidence="1">Homodimer.</text>
</comment>
<comment type="similarity">
    <text evidence="1">Belongs to the purine/pyrimidine phosphoribosyltransferase family. PyrE subfamily.</text>
</comment>
<name>PYRE_YERPP</name>
<dbReference type="EC" id="2.4.2.10" evidence="1"/>
<dbReference type="EMBL" id="CP000668">
    <property type="protein sequence ID" value="ABP42203.1"/>
    <property type="molecule type" value="Genomic_DNA"/>
</dbReference>
<dbReference type="RefSeq" id="WP_002208996.1">
    <property type="nucleotide sequence ID" value="NZ_CP009715.1"/>
</dbReference>
<dbReference type="SMR" id="A4TSE1"/>
<dbReference type="GeneID" id="57974545"/>
<dbReference type="KEGG" id="ypp:YPDSF_3860"/>
<dbReference type="PATRIC" id="fig|386656.14.peg.658"/>
<dbReference type="UniPathway" id="UPA00070">
    <property type="reaction ID" value="UER00119"/>
</dbReference>
<dbReference type="GO" id="GO:0005737">
    <property type="term" value="C:cytoplasm"/>
    <property type="evidence" value="ECO:0007669"/>
    <property type="project" value="TreeGrafter"/>
</dbReference>
<dbReference type="GO" id="GO:0000287">
    <property type="term" value="F:magnesium ion binding"/>
    <property type="evidence" value="ECO:0007669"/>
    <property type="project" value="UniProtKB-UniRule"/>
</dbReference>
<dbReference type="GO" id="GO:0004588">
    <property type="term" value="F:orotate phosphoribosyltransferase activity"/>
    <property type="evidence" value="ECO:0007669"/>
    <property type="project" value="UniProtKB-UniRule"/>
</dbReference>
<dbReference type="GO" id="GO:0006207">
    <property type="term" value="P:'de novo' pyrimidine nucleobase biosynthetic process"/>
    <property type="evidence" value="ECO:0007669"/>
    <property type="project" value="TreeGrafter"/>
</dbReference>
<dbReference type="GO" id="GO:0044205">
    <property type="term" value="P:'de novo' UMP biosynthetic process"/>
    <property type="evidence" value="ECO:0007669"/>
    <property type="project" value="UniProtKB-UniRule"/>
</dbReference>
<dbReference type="GO" id="GO:0046132">
    <property type="term" value="P:pyrimidine ribonucleoside biosynthetic process"/>
    <property type="evidence" value="ECO:0007669"/>
    <property type="project" value="TreeGrafter"/>
</dbReference>
<dbReference type="CDD" id="cd06223">
    <property type="entry name" value="PRTases_typeI"/>
    <property type="match status" value="1"/>
</dbReference>
<dbReference type="FunFam" id="3.40.50.2020:FF:000008">
    <property type="entry name" value="Orotate phosphoribosyltransferase"/>
    <property type="match status" value="1"/>
</dbReference>
<dbReference type="Gene3D" id="3.40.50.2020">
    <property type="match status" value="1"/>
</dbReference>
<dbReference type="HAMAP" id="MF_01208">
    <property type="entry name" value="PyrE"/>
    <property type="match status" value="1"/>
</dbReference>
<dbReference type="InterPro" id="IPR023031">
    <property type="entry name" value="OPRT"/>
</dbReference>
<dbReference type="InterPro" id="IPR004467">
    <property type="entry name" value="Or_phspho_trans_dom"/>
</dbReference>
<dbReference type="InterPro" id="IPR000836">
    <property type="entry name" value="PRibTrfase_dom"/>
</dbReference>
<dbReference type="InterPro" id="IPR029057">
    <property type="entry name" value="PRTase-like"/>
</dbReference>
<dbReference type="NCBIfam" id="TIGR00336">
    <property type="entry name" value="pyrE"/>
    <property type="match status" value="1"/>
</dbReference>
<dbReference type="PANTHER" id="PTHR46683">
    <property type="entry name" value="OROTATE PHOSPHORIBOSYLTRANSFERASE 1-RELATED"/>
    <property type="match status" value="1"/>
</dbReference>
<dbReference type="PANTHER" id="PTHR46683:SF1">
    <property type="entry name" value="OROTATE PHOSPHORIBOSYLTRANSFERASE 1-RELATED"/>
    <property type="match status" value="1"/>
</dbReference>
<dbReference type="Pfam" id="PF00156">
    <property type="entry name" value="Pribosyltran"/>
    <property type="match status" value="1"/>
</dbReference>
<dbReference type="SUPFAM" id="SSF53271">
    <property type="entry name" value="PRTase-like"/>
    <property type="match status" value="1"/>
</dbReference>
<dbReference type="PROSITE" id="PS00103">
    <property type="entry name" value="PUR_PYR_PR_TRANSFER"/>
    <property type="match status" value="1"/>
</dbReference>
<keyword id="KW-0328">Glycosyltransferase</keyword>
<keyword id="KW-0460">Magnesium</keyword>
<keyword id="KW-0665">Pyrimidine biosynthesis</keyword>
<keyword id="KW-0808">Transferase</keyword>
<sequence>MKAYQREFIEFALNKQVLKFGEFTLKSGRISPYFFNAGLFNTGLDLAKLGRFYAAALMDCGVEFDLLFGPAYKGIPIATTTAVALAEHHERDVPYCFNRKEAKTHGEGGNLVGSPLQGRVMLVDDVITAGTAIRESMEIINAQGATLAGVMISLDRQERGRGEISAIQEVERDYHCKVIAIVTLNDVIRYLEDKPEMAEHLVAVRQYREQYGVTL</sequence>
<evidence type="ECO:0000255" key="1">
    <source>
        <dbReference type="HAMAP-Rule" id="MF_01208"/>
    </source>
</evidence>
<gene>
    <name evidence="1" type="primary">pyrE</name>
    <name type="ordered locus">YPDSF_3860</name>
</gene>
<protein>
    <recommendedName>
        <fullName evidence="1">Orotate phosphoribosyltransferase</fullName>
        <shortName evidence="1">OPRT</shortName>
        <shortName evidence="1">OPRTase</shortName>
        <ecNumber evidence="1">2.4.2.10</ecNumber>
    </recommendedName>
</protein>
<reference key="1">
    <citation type="submission" date="2007-02" db="EMBL/GenBank/DDBJ databases">
        <title>Complete sequence of chromosome of Yersinia pestis Pestoides F.</title>
        <authorList>
            <consortium name="US DOE Joint Genome Institute"/>
            <person name="Copeland A."/>
            <person name="Lucas S."/>
            <person name="Lapidus A."/>
            <person name="Barry K."/>
            <person name="Detter J.C."/>
            <person name="Glavina del Rio T."/>
            <person name="Hammon N."/>
            <person name="Israni S."/>
            <person name="Dalin E."/>
            <person name="Tice H."/>
            <person name="Pitluck S."/>
            <person name="Di Bartolo G."/>
            <person name="Chain P."/>
            <person name="Malfatti S."/>
            <person name="Shin M."/>
            <person name="Vergez L."/>
            <person name="Schmutz J."/>
            <person name="Larimer F."/>
            <person name="Land M."/>
            <person name="Hauser L."/>
            <person name="Worsham P."/>
            <person name="Chu M."/>
            <person name="Bearden S."/>
            <person name="Garcia E."/>
            <person name="Richardson P."/>
        </authorList>
    </citation>
    <scope>NUCLEOTIDE SEQUENCE [LARGE SCALE GENOMIC DNA]</scope>
    <source>
        <strain>Pestoides F</strain>
    </source>
</reference>
<proteinExistence type="inferred from homology"/>
<feature type="chain" id="PRO_1000066331" description="Orotate phosphoribosyltransferase">
    <location>
        <begin position="1"/>
        <end position="215"/>
    </location>
</feature>
<feature type="binding site" description="in other chain" evidence="1">
    <location>
        <position position="26"/>
    </location>
    <ligand>
        <name>5-phospho-alpha-D-ribose 1-diphosphate</name>
        <dbReference type="ChEBI" id="CHEBI:58017"/>
        <note>ligand shared between dimeric partners</note>
    </ligand>
</feature>
<feature type="binding site" evidence="1">
    <location>
        <begin position="34"/>
        <end position="35"/>
    </location>
    <ligand>
        <name>orotate</name>
        <dbReference type="ChEBI" id="CHEBI:30839"/>
    </ligand>
</feature>
<feature type="binding site" description="in other chain" evidence="1">
    <location>
        <begin position="72"/>
        <end position="73"/>
    </location>
    <ligand>
        <name>5-phospho-alpha-D-ribose 1-diphosphate</name>
        <dbReference type="ChEBI" id="CHEBI:58017"/>
        <note>ligand shared between dimeric partners</note>
    </ligand>
</feature>
<feature type="binding site" evidence="1">
    <location>
        <position position="99"/>
    </location>
    <ligand>
        <name>5-phospho-alpha-D-ribose 1-diphosphate</name>
        <dbReference type="ChEBI" id="CHEBI:58017"/>
        <note>ligand shared between dimeric partners</note>
    </ligand>
</feature>
<feature type="binding site" description="in other chain" evidence="1">
    <location>
        <position position="100"/>
    </location>
    <ligand>
        <name>5-phospho-alpha-D-ribose 1-diphosphate</name>
        <dbReference type="ChEBI" id="CHEBI:58017"/>
        <note>ligand shared between dimeric partners</note>
    </ligand>
</feature>
<feature type="binding site" evidence="1">
    <location>
        <position position="103"/>
    </location>
    <ligand>
        <name>5-phospho-alpha-D-ribose 1-diphosphate</name>
        <dbReference type="ChEBI" id="CHEBI:58017"/>
        <note>ligand shared between dimeric partners</note>
    </ligand>
</feature>
<feature type="binding site" evidence="1">
    <location>
        <position position="105"/>
    </location>
    <ligand>
        <name>5-phospho-alpha-D-ribose 1-diphosphate</name>
        <dbReference type="ChEBI" id="CHEBI:58017"/>
        <note>ligand shared between dimeric partners</note>
    </ligand>
</feature>
<feature type="binding site" description="in other chain" evidence="1">
    <location>
        <begin position="124"/>
        <end position="132"/>
    </location>
    <ligand>
        <name>5-phospho-alpha-D-ribose 1-diphosphate</name>
        <dbReference type="ChEBI" id="CHEBI:58017"/>
        <note>ligand shared between dimeric partners</note>
    </ligand>
</feature>
<feature type="binding site" evidence="1">
    <location>
        <position position="128"/>
    </location>
    <ligand>
        <name>orotate</name>
        <dbReference type="ChEBI" id="CHEBI:30839"/>
    </ligand>
</feature>
<feature type="binding site" evidence="1">
    <location>
        <position position="156"/>
    </location>
    <ligand>
        <name>orotate</name>
        <dbReference type="ChEBI" id="CHEBI:30839"/>
    </ligand>
</feature>